<reference evidence="7" key="1">
    <citation type="journal article" date="2000" name="J. Biol. Chem.">
        <title>Isolation and cloning of four subunits of a fission yeast TFIIIC complex that includes an ortholog of the human regulatory protein TFIIICbeta.</title>
        <authorList>
            <person name="Huang Y."/>
            <person name="Hamada M."/>
            <person name="Maraia R.J."/>
        </authorList>
    </citation>
    <scope>NUCLEOTIDE SEQUENCE [MRNA]</scope>
    <scope>FUNCTION</scope>
    <scope>IDENTIFICATION IN TFIIIC</scope>
    <scope>INTERACTION WITH SFC1; SFC3 AND SFC4</scope>
</reference>
<reference evidence="8" key="2">
    <citation type="journal article" date="2002" name="Nature">
        <title>The genome sequence of Schizosaccharomyces pombe.</title>
        <authorList>
            <person name="Wood V."/>
            <person name="Gwilliam R."/>
            <person name="Rajandream M.A."/>
            <person name="Lyne M.H."/>
            <person name="Lyne R."/>
            <person name="Stewart A."/>
            <person name="Sgouros J.G."/>
            <person name="Peat N."/>
            <person name="Hayles J."/>
            <person name="Baker S.G."/>
            <person name="Basham D."/>
            <person name="Bowman S."/>
            <person name="Brooks K."/>
            <person name="Brown D."/>
            <person name="Brown S."/>
            <person name="Chillingworth T."/>
            <person name="Churcher C.M."/>
            <person name="Collins M."/>
            <person name="Connor R."/>
            <person name="Cronin A."/>
            <person name="Davis P."/>
            <person name="Feltwell T."/>
            <person name="Fraser A."/>
            <person name="Gentles S."/>
            <person name="Goble A."/>
            <person name="Hamlin N."/>
            <person name="Harris D.E."/>
            <person name="Hidalgo J."/>
            <person name="Hodgson G."/>
            <person name="Holroyd S."/>
            <person name="Hornsby T."/>
            <person name="Howarth S."/>
            <person name="Huckle E.J."/>
            <person name="Hunt S."/>
            <person name="Jagels K."/>
            <person name="James K.D."/>
            <person name="Jones L."/>
            <person name="Jones M."/>
            <person name="Leather S."/>
            <person name="McDonald S."/>
            <person name="McLean J."/>
            <person name="Mooney P."/>
            <person name="Moule S."/>
            <person name="Mungall K.L."/>
            <person name="Murphy L.D."/>
            <person name="Niblett D."/>
            <person name="Odell C."/>
            <person name="Oliver K."/>
            <person name="O'Neil S."/>
            <person name="Pearson D."/>
            <person name="Quail M.A."/>
            <person name="Rabbinowitsch E."/>
            <person name="Rutherford K.M."/>
            <person name="Rutter S."/>
            <person name="Saunders D."/>
            <person name="Seeger K."/>
            <person name="Sharp S."/>
            <person name="Skelton J."/>
            <person name="Simmonds M.N."/>
            <person name="Squares R."/>
            <person name="Squares S."/>
            <person name="Stevens K."/>
            <person name="Taylor K."/>
            <person name="Taylor R.G."/>
            <person name="Tivey A."/>
            <person name="Walsh S.V."/>
            <person name="Warren T."/>
            <person name="Whitehead S."/>
            <person name="Woodward J.R."/>
            <person name="Volckaert G."/>
            <person name="Aert R."/>
            <person name="Robben J."/>
            <person name="Grymonprez B."/>
            <person name="Weltjens I."/>
            <person name="Vanstreels E."/>
            <person name="Rieger M."/>
            <person name="Schaefer M."/>
            <person name="Mueller-Auer S."/>
            <person name="Gabel C."/>
            <person name="Fuchs M."/>
            <person name="Duesterhoeft A."/>
            <person name="Fritzc C."/>
            <person name="Holzer E."/>
            <person name="Moestl D."/>
            <person name="Hilbert H."/>
            <person name="Borzym K."/>
            <person name="Langer I."/>
            <person name="Beck A."/>
            <person name="Lehrach H."/>
            <person name="Reinhardt R."/>
            <person name="Pohl T.M."/>
            <person name="Eger P."/>
            <person name="Zimmermann W."/>
            <person name="Wedler H."/>
            <person name="Wambutt R."/>
            <person name="Purnelle B."/>
            <person name="Goffeau A."/>
            <person name="Cadieu E."/>
            <person name="Dreano S."/>
            <person name="Gloux S."/>
            <person name="Lelaure V."/>
            <person name="Mottier S."/>
            <person name="Galibert F."/>
            <person name="Aves S.J."/>
            <person name="Xiang Z."/>
            <person name="Hunt C."/>
            <person name="Moore K."/>
            <person name="Hurst S.M."/>
            <person name="Lucas M."/>
            <person name="Rochet M."/>
            <person name="Gaillardin C."/>
            <person name="Tallada V.A."/>
            <person name="Garzon A."/>
            <person name="Thode G."/>
            <person name="Daga R.R."/>
            <person name="Cruzado L."/>
            <person name="Jimenez J."/>
            <person name="Sanchez M."/>
            <person name="del Rey F."/>
            <person name="Benito J."/>
            <person name="Dominguez A."/>
            <person name="Revuelta J.L."/>
            <person name="Moreno S."/>
            <person name="Armstrong J."/>
            <person name="Forsburg S.L."/>
            <person name="Cerutti L."/>
            <person name="Lowe T."/>
            <person name="McCombie W.R."/>
            <person name="Paulsen I."/>
            <person name="Potashkin J."/>
            <person name="Shpakovski G.V."/>
            <person name="Ussery D."/>
            <person name="Barrell B.G."/>
            <person name="Nurse P."/>
        </authorList>
    </citation>
    <scope>NUCLEOTIDE SEQUENCE [LARGE SCALE GENOMIC DNA]</scope>
    <source>
        <strain>972 / ATCC 24843</strain>
    </source>
</reference>
<reference evidence="7" key="3">
    <citation type="journal article" date="2006" name="Cell">
        <title>A role for TFIIIC transcription factor complex in genome organization.</title>
        <authorList>
            <person name="Noma K."/>
            <person name="Cam H.P."/>
            <person name="Maraia R.J."/>
            <person name="Grewal S.I.S."/>
        </authorList>
    </citation>
    <scope>FUNCTION</scope>
</reference>
<reference evidence="7" key="4">
    <citation type="journal article" date="2006" name="Nat. Biotechnol.">
        <title>ORFeome cloning and global analysis of protein localization in the fission yeast Schizosaccharomyces pombe.</title>
        <authorList>
            <person name="Matsuyama A."/>
            <person name="Arai R."/>
            <person name="Yashiroda Y."/>
            <person name="Shirai A."/>
            <person name="Kamata A."/>
            <person name="Sekido S."/>
            <person name="Kobayashi Y."/>
            <person name="Hashimoto A."/>
            <person name="Hamamoto M."/>
            <person name="Hiraoka Y."/>
            <person name="Horinouchi S."/>
            <person name="Yoshida M."/>
        </authorList>
    </citation>
    <scope>SUBCELLULAR LOCATION [LARGE SCALE ANALYSIS]</scope>
</reference>
<proteinExistence type="evidence at protein level"/>
<feature type="chain" id="PRO_0000307796" description="Transcription factor tau subunit sfc6">
    <location>
        <begin position="1"/>
        <end position="582"/>
    </location>
</feature>
<feature type="repeat" description="WD 1" evidence="2">
    <location>
        <begin position="221"/>
        <end position="262"/>
    </location>
</feature>
<feature type="repeat" description="WD 2" evidence="2">
    <location>
        <begin position="268"/>
        <end position="314"/>
    </location>
</feature>
<feature type="repeat" description="WD 3" evidence="2">
    <location>
        <begin position="326"/>
        <end position="369"/>
    </location>
</feature>
<feature type="region of interest" description="Disordered" evidence="3">
    <location>
        <begin position="1"/>
        <end position="97"/>
    </location>
</feature>
<feature type="compositionally biased region" description="Acidic residues" evidence="3">
    <location>
        <begin position="18"/>
        <end position="39"/>
    </location>
</feature>
<feature type="compositionally biased region" description="Polar residues" evidence="3">
    <location>
        <begin position="63"/>
        <end position="87"/>
    </location>
</feature>
<evidence type="ECO:0000250" key="1">
    <source>
        <dbReference type="UniProtKB" id="Q06339"/>
    </source>
</evidence>
<evidence type="ECO:0000255" key="2"/>
<evidence type="ECO:0000256" key="3">
    <source>
        <dbReference type="SAM" id="MobiDB-lite"/>
    </source>
</evidence>
<evidence type="ECO:0000269" key="4">
    <source>
    </source>
</evidence>
<evidence type="ECO:0000269" key="5">
    <source>
    </source>
</evidence>
<evidence type="ECO:0000269" key="6">
    <source>
    </source>
</evidence>
<evidence type="ECO:0000305" key="7"/>
<evidence type="ECO:0000312" key="8">
    <source>
        <dbReference type="EMBL" id="CAA18865.1"/>
    </source>
</evidence>
<organism>
    <name type="scientific">Schizosaccharomyces pombe (strain 972 / ATCC 24843)</name>
    <name type="common">Fission yeast</name>
    <dbReference type="NCBI Taxonomy" id="284812"/>
    <lineage>
        <taxon>Eukaryota</taxon>
        <taxon>Fungi</taxon>
        <taxon>Dikarya</taxon>
        <taxon>Ascomycota</taxon>
        <taxon>Taphrinomycotina</taxon>
        <taxon>Schizosaccharomycetes</taxon>
        <taxon>Schizosaccharomycetales</taxon>
        <taxon>Schizosaccharomycetaceae</taxon>
        <taxon>Schizosaccharomyces</taxon>
    </lineage>
</organism>
<name>SFC6_SCHPO</name>
<accession>O60174</accession>
<comment type="function">
    <text evidence="1 4 5">TFIIIC mediates tRNA and 5S RNA gene activation by binding to intragenic promoter elements. Upstream of the transcription start site, TFIIIC assembles the initiation complex TFIIIB-TFIIIC-tDNA, which is sufficient for RNA polymerase III recruitment and function. Part of the tauB domain of TFIIIC that binds boxB DNA promoter sites of tRNA and similar genes. Cooperates with sfc3 in DNA binding. Localizes to chromatin insulator sequence without recruiting RNA polymerase III and plays a role in nuclear organization.</text>
</comment>
<comment type="subunit">
    <text evidence="1 4">Component of the TFIIIC complex including sfc1, sfc3, sfc4, sfc6 and sfc7. The subunits are organized in two globular domains, tauA and tauB, connected by a proteolysis-sensitive and flexible linker. Interacts with sfc1, sfc3 and sfc4.</text>
</comment>
<comment type="subcellular location">
    <subcellularLocation>
        <location evidence="6">Nucleus</location>
    </subcellularLocation>
</comment>
<keyword id="KW-0238">DNA-binding</keyword>
<keyword id="KW-0539">Nucleus</keyword>
<keyword id="KW-1185">Reference proteome</keyword>
<keyword id="KW-0677">Repeat</keyword>
<keyword id="KW-0804">Transcription</keyword>
<keyword id="KW-0805">Transcription regulation</keyword>
<keyword id="KW-0853">WD repeat</keyword>
<gene>
    <name evidence="8" type="primary">sfc6</name>
    <name evidence="1" type="synonym">tfc6</name>
    <name type="ORF">SPBC21H7.05</name>
</gene>
<dbReference type="EMBL" id="CU329671">
    <property type="protein sequence ID" value="CAA18865.1"/>
    <property type="molecule type" value="Genomic_DNA"/>
</dbReference>
<dbReference type="PIR" id="T39931">
    <property type="entry name" value="T39931"/>
</dbReference>
<dbReference type="RefSeq" id="NP_595930.1">
    <property type="nucleotide sequence ID" value="NM_001021838.2"/>
</dbReference>
<dbReference type="SMR" id="O60174"/>
<dbReference type="BioGRID" id="276952">
    <property type="interactions" value="5"/>
</dbReference>
<dbReference type="ComplexPortal" id="CPX-8903">
    <property type="entry name" value="General transcription factor TFIIIC complex"/>
</dbReference>
<dbReference type="FunCoup" id="O60174">
    <property type="interactions" value="5"/>
</dbReference>
<dbReference type="IntAct" id="O60174">
    <property type="interactions" value="1"/>
</dbReference>
<dbReference type="STRING" id="284812.O60174"/>
<dbReference type="iPTMnet" id="O60174"/>
<dbReference type="PaxDb" id="4896-SPBC21H7.05.1"/>
<dbReference type="EnsemblFungi" id="SPBC21H7.05.1">
    <property type="protein sequence ID" value="SPBC21H7.05.1:pep"/>
    <property type="gene ID" value="SPBC21H7.05"/>
</dbReference>
<dbReference type="GeneID" id="2540424"/>
<dbReference type="KEGG" id="spo:2540424"/>
<dbReference type="PomBase" id="SPBC21H7.05">
    <property type="gene designation" value="sfc6"/>
</dbReference>
<dbReference type="VEuPathDB" id="FungiDB:SPBC21H7.05"/>
<dbReference type="eggNOG" id="ENOG502S1WJ">
    <property type="taxonomic scope" value="Eukaryota"/>
</dbReference>
<dbReference type="HOGENOM" id="CLU_459389_0_0_1"/>
<dbReference type="InParanoid" id="O60174"/>
<dbReference type="OMA" id="HKRDICY"/>
<dbReference type="PhylomeDB" id="O60174"/>
<dbReference type="Reactome" id="R-SPO-76061">
    <property type="pathway name" value="RNA Polymerase III Transcription Initiation From Type 1 Promoter"/>
</dbReference>
<dbReference type="Reactome" id="R-SPO-76066">
    <property type="pathway name" value="RNA Polymerase III Transcription Initiation From Type 2 Promoter"/>
</dbReference>
<dbReference type="PRO" id="PR:O60174"/>
<dbReference type="Proteomes" id="UP000002485">
    <property type="component" value="Chromosome II"/>
</dbReference>
<dbReference type="GO" id="GO:0000785">
    <property type="term" value="C:chromatin"/>
    <property type="evidence" value="ECO:0000314"/>
    <property type="project" value="PomBase"/>
</dbReference>
<dbReference type="GO" id="GO:0005829">
    <property type="term" value="C:cytosol"/>
    <property type="evidence" value="ECO:0007005"/>
    <property type="project" value="PomBase"/>
</dbReference>
<dbReference type="GO" id="GO:0005634">
    <property type="term" value="C:nucleus"/>
    <property type="evidence" value="ECO:0007005"/>
    <property type="project" value="PomBase"/>
</dbReference>
<dbReference type="GO" id="GO:0000127">
    <property type="term" value="C:transcription factor TFIIIC complex"/>
    <property type="evidence" value="ECO:0000314"/>
    <property type="project" value="PomBase"/>
</dbReference>
<dbReference type="GO" id="GO:0000995">
    <property type="term" value="F:RNA polymerase III general transcription initiation factor activity"/>
    <property type="evidence" value="ECO:0000314"/>
    <property type="project" value="PomBase"/>
</dbReference>
<dbReference type="GO" id="GO:0071443">
    <property type="term" value="F:tDNA binding"/>
    <property type="evidence" value="ECO:0000314"/>
    <property type="project" value="PomBase"/>
</dbReference>
<dbReference type="GO" id="GO:0006383">
    <property type="term" value="P:transcription by RNA polymerase III"/>
    <property type="evidence" value="ECO:0000318"/>
    <property type="project" value="GO_Central"/>
</dbReference>
<dbReference type="GO" id="GO:0006384">
    <property type="term" value="P:transcription initiation at RNA polymerase III promoter"/>
    <property type="evidence" value="ECO:0000314"/>
    <property type="project" value="PomBase"/>
</dbReference>
<dbReference type="Gene3D" id="2.130.10.10">
    <property type="entry name" value="YVTN repeat-like/Quinoprotein amine dehydrogenase"/>
    <property type="match status" value="2"/>
</dbReference>
<dbReference type="InterPro" id="IPR052416">
    <property type="entry name" value="GTF3C_component"/>
</dbReference>
<dbReference type="InterPro" id="IPR015943">
    <property type="entry name" value="WD40/YVTN_repeat-like_dom_sf"/>
</dbReference>
<dbReference type="InterPro" id="IPR036322">
    <property type="entry name" value="WD40_repeat_dom_sf"/>
</dbReference>
<dbReference type="PANTHER" id="PTHR15052:SF2">
    <property type="entry name" value="GENERAL TRANSCRIPTION FACTOR 3C POLYPEPTIDE 2"/>
    <property type="match status" value="1"/>
</dbReference>
<dbReference type="PANTHER" id="PTHR15052">
    <property type="entry name" value="RNA POLYMERASE III TRANSCRIPTION INITIATION FACTOR COMPLEX SUBUNIT"/>
    <property type="match status" value="1"/>
</dbReference>
<dbReference type="SUPFAM" id="SSF50978">
    <property type="entry name" value="WD40 repeat-like"/>
    <property type="match status" value="1"/>
</dbReference>
<sequence>MGPKSKEYENPSSYKNDEDNDDDGDFVLENVMSEEDIEIETPSRNRKRVSTTRRTPSKPIRSQPLTPSSSKGAGNEPKSQNSSTTRGSAKKQSSKGLEEKLINSYGTHVESLNKGRRLIEIWKYYETAPGQSSFEGQTSSDSKLQTLLNLDGQQLLSYSENPFYLFEVKNLSISFHFESPQQVEPCQPVNPFKENPQKSGFVVNTGIPLSSVSWLPTNKETQFLAVGGMLKFSETTESVFMRTSGRNQIQLWKLENKTNFKSEFILYHDWGSVLQLEWCPTISVEDSILGFLAVVCSDGKLRVLRVPRSPVKFHVFVEQADFTFGFNDSLISCCTWVSPEHGDIHQILVGCSNGYLALWDILSSQECPLFYIPYHDSYIHNVVQCLDDFPWLFLTTAFDCYTRIFDIRDPIIDNRPLSHKRDICYTITWNNMLQSIISCSESQSVVIESLRGTSTQLLDERNGSIISLSNSKFHPFVACAASDGIVTIVNPFRLLGFSHKQKANVHRIFQLEYSEKQDSYRMLDGFRPRLPKAKKLDMYIYPWQIQVNKVEWNGNKGYAGWLASGMACGILRVEDLSAVERR</sequence>
<protein>
    <recommendedName>
        <fullName>Transcription factor tau subunit sfc6</fullName>
    </recommendedName>
    <alternativeName>
        <fullName>TFIIIC subunit sfc6</fullName>
    </alternativeName>
    <alternativeName>
        <fullName>Transcription factor C subunit 6</fullName>
    </alternativeName>
</protein>